<feature type="chain" id="PRO_0000165938" description="L-hydantoinase">
    <location>
        <begin position="1"/>
        <end position="458"/>
    </location>
</feature>
<feature type="binding site" evidence="1 4">
    <location>
        <position position="60"/>
    </location>
    <ligand>
        <name>Zn(2+)</name>
        <dbReference type="ChEBI" id="CHEBI:29105"/>
        <label>1</label>
    </ligand>
</feature>
<feature type="binding site" evidence="1 4">
    <location>
        <position position="62"/>
    </location>
    <ligand>
        <name>Zn(2+)</name>
        <dbReference type="ChEBI" id="CHEBI:29105"/>
        <label>1</label>
    </ligand>
</feature>
<feature type="binding site" description="via carbamate group" evidence="1 4">
    <location>
        <position position="147"/>
    </location>
    <ligand>
        <name>Zn(2+)</name>
        <dbReference type="ChEBI" id="CHEBI:29105"/>
        <label>1</label>
    </ligand>
</feature>
<feature type="binding site" description="via carbamate group" evidence="1 4">
    <location>
        <position position="147"/>
    </location>
    <ligand>
        <name>Zn(2+)</name>
        <dbReference type="ChEBI" id="CHEBI:29105"/>
        <label>2</label>
    </ligand>
</feature>
<feature type="binding site" evidence="1 4">
    <location>
        <position position="183"/>
    </location>
    <ligand>
        <name>Zn(2+)</name>
        <dbReference type="ChEBI" id="CHEBI:29105"/>
        <label>2</label>
    </ligand>
</feature>
<feature type="binding site" evidence="1 4">
    <location>
        <position position="239"/>
    </location>
    <ligand>
        <name>Zn(2+)</name>
        <dbReference type="ChEBI" id="CHEBI:29105"/>
        <label>2</label>
    </ligand>
</feature>
<feature type="binding site" evidence="1 4">
    <location>
        <position position="312"/>
    </location>
    <ligand>
        <name>Zn(2+)</name>
        <dbReference type="ChEBI" id="CHEBI:29105"/>
        <label>1</label>
    </ligand>
</feature>
<feature type="modified residue" description="N6-carboxylysine" evidence="1 4">
    <location>
        <position position="147"/>
    </location>
</feature>
<feature type="strand" evidence="5">
    <location>
        <begin position="2"/>
        <end position="13"/>
    </location>
</feature>
<feature type="strand" evidence="5">
    <location>
        <begin position="16"/>
        <end position="25"/>
    </location>
</feature>
<feature type="strand" evidence="5">
    <location>
        <begin position="28"/>
        <end position="34"/>
    </location>
</feature>
<feature type="strand" evidence="5">
    <location>
        <begin position="41"/>
        <end position="46"/>
    </location>
</feature>
<feature type="strand" evidence="5">
    <location>
        <begin position="51"/>
        <end position="54"/>
    </location>
</feature>
<feature type="strand" evidence="5">
    <location>
        <begin position="56"/>
        <end position="62"/>
    </location>
</feature>
<feature type="helix" evidence="5">
    <location>
        <begin position="66"/>
        <end position="68"/>
    </location>
</feature>
<feature type="turn" evidence="5">
    <location>
        <begin position="69"/>
        <end position="71"/>
    </location>
</feature>
<feature type="helix" evidence="5">
    <location>
        <begin position="75"/>
        <end position="85"/>
    </location>
</feature>
<feature type="strand" evidence="5">
    <location>
        <begin position="87"/>
        <end position="92"/>
    </location>
</feature>
<feature type="strand" evidence="5">
    <location>
        <begin position="96"/>
        <end position="98"/>
    </location>
</feature>
<feature type="helix" evidence="5">
    <location>
        <begin position="103"/>
        <end position="116"/>
    </location>
</feature>
<feature type="strand" evidence="5">
    <location>
        <begin position="118"/>
        <end position="126"/>
    </location>
</feature>
<feature type="helix" evidence="5">
    <location>
        <begin position="132"/>
        <end position="140"/>
    </location>
</feature>
<feature type="strand" evidence="5">
    <location>
        <begin position="145"/>
        <end position="151"/>
    </location>
</feature>
<feature type="turn" evidence="5">
    <location>
        <begin position="155"/>
        <end position="157"/>
    </location>
</feature>
<feature type="helix" evidence="5">
    <location>
        <begin position="163"/>
        <end position="176"/>
    </location>
</feature>
<feature type="strand" evidence="5">
    <location>
        <begin position="179"/>
        <end position="183"/>
    </location>
</feature>
<feature type="helix" evidence="5">
    <location>
        <begin position="187"/>
        <end position="199"/>
    </location>
</feature>
<feature type="helix" evidence="5">
    <location>
        <begin position="205"/>
        <end position="211"/>
    </location>
</feature>
<feature type="helix" evidence="5">
    <location>
        <begin position="214"/>
        <end position="231"/>
    </location>
</feature>
<feature type="strand" evidence="5">
    <location>
        <begin position="234"/>
        <end position="237"/>
    </location>
</feature>
<feature type="helix" evidence="5">
    <location>
        <begin position="243"/>
        <end position="254"/>
    </location>
</feature>
<feature type="strand" evidence="5">
    <location>
        <begin position="259"/>
        <end position="263"/>
    </location>
</feature>
<feature type="helix" evidence="5">
    <location>
        <begin position="265"/>
        <end position="268"/>
    </location>
</feature>
<feature type="helix" evidence="5">
    <location>
        <begin position="272"/>
        <end position="274"/>
    </location>
</feature>
<feature type="helix" evidence="5">
    <location>
        <begin position="275"/>
        <end position="278"/>
    </location>
</feature>
<feature type="helix" evidence="5">
    <location>
        <begin position="279"/>
        <end position="282"/>
    </location>
</feature>
<feature type="helix" evidence="5">
    <location>
        <begin position="291"/>
        <end position="302"/>
    </location>
</feature>
<feature type="helix" evidence="5">
    <location>
        <begin position="318"/>
        <end position="320"/>
    </location>
</feature>
<feature type="helix" evidence="5">
    <location>
        <begin position="322"/>
        <end position="325"/>
    </location>
</feature>
<feature type="helix" evidence="5">
    <location>
        <begin position="328"/>
        <end position="330"/>
    </location>
</feature>
<feature type="turn" evidence="5">
    <location>
        <begin position="338"/>
        <end position="340"/>
    </location>
</feature>
<feature type="helix" evidence="5">
    <location>
        <begin position="341"/>
        <end position="348"/>
    </location>
</feature>
<feature type="turn" evidence="5">
    <location>
        <begin position="349"/>
        <end position="353"/>
    </location>
</feature>
<feature type="helix" evidence="5">
    <location>
        <begin position="357"/>
        <end position="364"/>
    </location>
</feature>
<feature type="helix" evidence="5">
    <location>
        <begin position="366"/>
        <end position="371"/>
    </location>
</feature>
<feature type="turn" evidence="5">
    <location>
        <begin position="375"/>
        <end position="377"/>
    </location>
</feature>
<feature type="strand" evidence="5">
    <location>
        <begin position="378"/>
        <end position="380"/>
    </location>
</feature>
<feature type="strand" evidence="5">
    <location>
        <begin position="389"/>
        <end position="394"/>
    </location>
</feature>
<feature type="helix" evidence="5">
    <location>
        <begin position="402"/>
        <end position="404"/>
    </location>
</feature>
<feature type="strand" evidence="5">
    <location>
        <begin position="406"/>
        <end position="408"/>
    </location>
</feature>
<feature type="turn" evidence="5">
    <location>
        <begin position="413"/>
        <end position="416"/>
    </location>
</feature>
<feature type="strand" evidence="5">
    <location>
        <begin position="422"/>
        <end position="428"/>
    </location>
</feature>
<feature type="strand" evidence="5">
    <location>
        <begin position="431"/>
        <end position="435"/>
    </location>
</feature>
<keyword id="KW-0002">3D-structure</keyword>
<keyword id="KW-0903">Direct protein sequencing</keyword>
<keyword id="KW-0378">Hydrolase</keyword>
<keyword id="KW-0479">Metal-binding</keyword>
<keyword id="KW-0862">Zinc</keyword>
<sequence length="458" mass="49597">MFDVIVKNCRLVSSDGITEADILVKDGKVAAISADTSDVEASRTIDAGGKFVMPGVVDEHVHIIDMDLKNRYGRFELDSESAAVGGITTIIEMPITFPPTTTLDAFLEKKKQAGQRLKVDFALYGGGVPGNLPEIRKMHDAGAVGFKSMMAASVPGMFDAVSDGELFEIFQEIAACGSVIVVHAENETIIQALQKQIKAAGGKDMAAYEASQPVFQENEAIQRALLLQKEAGCRLIVLHVSNPDGVELIHQAQSEGQDVHCESGPQYLNITTDDAERIGPYMKVAPPVRSAEMNIRLWEQLENGLIDTLGSDHGGHPVEDKEPGWKDVWKAGNGALGLETSLPMMLTNGVNKGRLSLERLVEVMCEKPAKLFGIYPQKGTLQVGSDADLLILDLDIDTKVDASQFRSLHKYSPFDGMPVTGAPVLTMVRGTVVAEKGEVLVEQGFGQFVTRRNYEASK</sequence>
<proteinExistence type="evidence at protein level"/>
<comment type="function">
    <text>Rather more predominant for the cleavage of aryl- than for alkyl-hydantoin derivatives. The stereoselectivity of this enzyme depends on the substrate used for bioconversion: strictly L-selective for the cleavage of D,L-5-indolylmethylhydantoin, but D-selective for the hydrolysis of D,L-methylthioethylhydantoin.</text>
</comment>
<comment type="cofactor">
    <cofactor evidence="1">
        <name>Zn(2+)</name>
        <dbReference type="ChEBI" id="CHEBI:29105"/>
    </cofactor>
    <text evidence="1">Binds 2 Zn(2+) ions per subunit.</text>
</comment>
<comment type="subunit">
    <text evidence="1">Homotetramer.</text>
</comment>
<comment type="PTM">
    <text evidence="1">Carboxylation allows a single lysine to coordinate two zinc ions.</text>
</comment>
<comment type="mass spectrometry" mass="49680.0" method="MALDI" evidence="2"/>
<comment type="similarity">
    <text evidence="3">Belongs to the metallo-dependent hydrolases superfamily. Hydantoinase/dihydropyrimidinase family.</text>
</comment>
<gene>
    <name type="primary">lhyD</name>
</gene>
<evidence type="ECO:0000269" key="1">
    <source>
    </source>
</evidence>
<evidence type="ECO:0000269" key="2">
    <source>
    </source>
</evidence>
<evidence type="ECO:0000305" key="3"/>
<evidence type="ECO:0007744" key="4">
    <source>
        <dbReference type="PDB" id="1GKR"/>
    </source>
</evidence>
<evidence type="ECO:0007829" key="5">
    <source>
        <dbReference type="PDB" id="1GKR"/>
    </source>
</evidence>
<organism>
    <name type="scientific">Paenarthrobacter aurescens</name>
    <name type="common">Arthrobacter aurescens</name>
    <dbReference type="NCBI Taxonomy" id="43663"/>
    <lineage>
        <taxon>Bacteria</taxon>
        <taxon>Bacillati</taxon>
        <taxon>Actinomycetota</taxon>
        <taxon>Actinomycetes</taxon>
        <taxon>Micrococcales</taxon>
        <taxon>Micrococcaceae</taxon>
        <taxon>Paenarthrobacter</taxon>
    </lineage>
</organism>
<dbReference type="EC" id="3.5.2.-"/>
<dbReference type="PDB" id="1GKR">
    <property type="method" value="X-ray"/>
    <property type="resolution" value="2.60 A"/>
    <property type="chains" value="A/B/C/D=1-458"/>
</dbReference>
<dbReference type="PDBsum" id="1GKR"/>
<dbReference type="SMR" id="P81006"/>
<dbReference type="DrugBank" id="DB03801">
    <property type="generic name" value="Lysine Nz-Carboxylic Acid"/>
</dbReference>
<dbReference type="BRENDA" id="3.5.2.2">
    <property type="organism ID" value="441"/>
</dbReference>
<dbReference type="EvolutionaryTrace" id="P81006"/>
<dbReference type="GO" id="GO:0005737">
    <property type="term" value="C:cytoplasm"/>
    <property type="evidence" value="ECO:0007669"/>
    <property type="project" value="TreeGrafter"/>
</dbReference>
<dbReference type="GO" id="GO:0004038">
    <property type="term" value="F:allantoinase activity"/>
    <property type="evidence" value="ECO:0007669"/>
    <property type="project" value="InterPro"/>
</dbReference>
<dbReference type="GO" id="GO:0050897">
    <property type="term" value="F:cobalt ion binding"/>
    <property type="evidence" value="ECO:0007669"/>
    <property type="project" value="InterPro"/>
</dbReference>
<dbReference type="GO" id="GO:0008270">
    <property type="term" value="F:zinc ion binding"/>
    <property type="evidence" value="ECO:0007669"/>
    <property type="project" value="InterPro"/>
</dbReference>
<dbReference type="GO" id="GO:0000256">
    <property type="term" value="P:allantoin catabolic process"/>
    <property type="evidence" value="ECO:0007669"/>
    <property type="project" value="InterPro"/>
</dbReference>
<dbReference type="GO" id="GO:0006145">
    <property type="term" value="P:purine nucleobase catabolic process"/>
    <property type="evidence" value="ECO:0007669"/>
    <property type="project" value="TreeGrafter"/>
</dbReference>
<dbReference type="CDD" id="cd01315">
    <property type="entry name" value="L-HYD_ALN"/>
    <property type="match status" value="1"/>
</dbReference>
<dbReference type="FunFam" id="3.20.20.140:FF:000174">
    <property type="entry name" value="Dihydropyrimidinase-related protein 2"/>
    <property type="match status" value="1"/>
</dbReference>
<dbReference type="Gene3D" id="3.20.20.140">
    <property type="entry name" value="Metal-dependent hydrolases"/>
    <property type="match status" value="1"/>
</dbReference>
<dbReference type="Gene3D" id="2.30.40.10">
    <property type="entry name" value="Urease, subunit C, domain 1"/>
    <property type="match status" value="1"/>
</dbReference>
<dbReference type="InterPro" id="IPR017593">
    <property type="entry name" value="Allantoinase"/>
</dbReference>
<dbReference type="InterPro" id="IPR006680">
    <property type="entry name" value="Amidohydro-rel"/>
</dbReference>
<dbReference type="InterPro" id="IPR050138">
    <property type="entry name" value="DHOase/Allantoinase_Hydrolase"/>
</dbReference>
<dbReference type="InterPro" id="IPR011059">
    <property type="entry name" value="Metal-dep_hydrolase_composite"/>
</dbReference>
<dbReference type="InterPro" id="IPR032466">
    <property type="entry name" value="Metal_Hydrolase"/>
</dbReference>
<dbReference type="NCBIfam" id="TIGR03178">
    <property type="entry name" value="allantoinase"/>
    <property type="match status" value="1"/>
</dbReference>
<dbReference type="PANTHER" id="PTHR43668">
    <property type="entry name" value="ALLANTOINASE"/>
    <property type="match status" value="1"/>
</dbReference>
<dbReference type="PANTHER" id="PTHR43668:SF4">
    <property type="entry name" value="ALLANTOINASE"/>
    <property type="match status" value="1"/>
</dbReference>
<dbReference type="Pfam" id="PF01979">
    <property type="entry name" value="Amidohydro_1"/>
    <property type="match status" value="1"/>
</dbReference>
<dbReference type="SUPFAM" id="SSF51338">
    <property type="entry name" value="Composite domain of metallo-dependent hydrolases"/>
    <property type="match status" value="1"/>
</dbReference>
<dbReference type="SUPFAM" id="SSF51556">
    <property type="entry name" value="Metallo-dependent hydrolases"/>
    <property type="match status" value="1"/>
</dbReference>
<reference key="1">
    <citation type="journal article" date="1998" name="Biol. Chem.">
        <title>Molecular evolution of hydantoinases.</title>
        <authorList>
            <person name="May O."/>
            <person name="Habenicht A."/>
            <person name="Mattes R."/>
            <person name="Syldatk C."/>
            <person name="Siemann M."/>
        </authorList>
    </citation>
    <scope>PROTEIN SEQUENCE</scope>
    <source>
        <strain>DSM 3745</strain>
    </source>
</reference>
<reference key="2">
    <citation type="journal article" date="1998" name="J. Biotechnol.">
        <title>Substrate-dependent enantioselectivity of a novel hydantoinase from Arthrobacter aurescens DSM 3745: purification and characterization as new member of cyclic amidases.</title>
        <authorList>
            <person name="May O."/>
            <person name="Siemann M."/>
            <person name="Pietzsch M."/>
            <person name="Kiess M."/>
            <person name="Mattes R."/>
            <person name="Syldatk C."/>
        </authorList>
    </citation>
    <scope>PROTEIN SEQUENCE OF 1-40</scope>
    <scope>CHARACTERIZATION</scope>
    <scope>MASS SPECTROMETRY</scope>
    <source>
        <strain>DSM 3745</strain>
    </source>
</reference>
<reference key="3">
    <citation type="journal article" date="1996" name="Acta Crystallogr. D">
        <title>Crystallization and preliminary X-ray analysis of a hydantoinase from Arthrobacter aurecens DSM 3745.</title>
        <authorList>
            <person name="May O."/>
            <person name="Siemann M."/>
            <person name="Syldatk C."/>
            <person name="Niefind K."/>
            <person name="Schomburg D."/>
        </authorList>
    </citation>
    <scope>X-RAY CRYSTALLOGRAPHY (2.6 ANGSTROMS)</scope>
    <source>
        <strain>DSM 3745</strain>
    </source>
</reference>
<reference key="4">
    <citation type="journal article" date="2002" name="Biochemistry">
        <title>The structure of L-hydantoinase from Arthobacter aurescens leads to an understanding of dihydropyrimidinase substrate and enantio specificity.</title>
        <authorList>
            <person name="Abendroth J."/>
            <person name="Niefind K."/>
            <person name="May O."/>
            <person name="Siemann M."/>
            <person name="Syldatk C."/>
            <person name="Schomburg D."/>
        </authorList>
    </citation>
    <scope>X-RAY CRYSTALLOGRAPHY (2.60 ANGSTROMS) IN COMPLEX WITH ZINC IONS</scope>
    <scope>SUBUNIT</scope>
    <scope>CARBOXYLATION AT LYS-147</scope>
</reference>
<accession>P81006</accession>
<protein>
    <recommendedName>
        <fullName>L-hydantoinase</fullName>
        <ecNumber>3.5.2.-</ecNumber>
    </recommendedName>
    <alternativeName>
        <fullName>Non-ATP-dependent L-selective hydantoinase</fullName>
    </alternativeName>
</protein>
<name>HYDL_PAEAU</name>